<reference key="1">
    <citation type="journal article" date="2004" name="Plant Physiol.">
        <title>A comparison of rice chloroplast genomes.</title>
        <authorList>
            <person name="Tang J."/>
            <person name="Xia H."/>
            <person name="Cao M."/>
            <person name="Zhang X."/>
            <person name="Zeng W."/>
            <person name="Hu S."/>
            <person name="Tong W."/>
            <person name="Wang J."/>
            <person name="Wang J."/>
            <person name="Yu J."/>
            <person name="Yang H."/>
            <person name="Zhu L."/>
        </authorList>
    </citation>
    <scope>NUCLEOTIDE SEQUENCE [LARGE SCALE GENOMIC DNA]</scope>
    <source>
        <strain>cv. PA64s</strain>
    </source>
</reference>
<sequence length="136" mass="15529">MLSPKRTRFRKQHRGRMKGKSYRGNCICFGRYALQALEPTWITARQIEAGRRAMTRYARRGGKIWVRIFPDKPVTIRPTETRMGSGKGSPEYWVAVVKPGRILYEMGGVSETVARAAISIAASKMPIRSQFLRLEI</sequence>
<keyword id="KW-0150">Chloroplast</keyword>
<keyword id="KW-0934">Plastid</keyword>
<keyword id="KW-0687">Ribonucleoprotein</keyword>
<keyword id="KW-0689">Ribosomal protein</keyword>
<geneLocation type="chloroplast"/>
<feature type="chain" id="PRO_0000062300" description="Large ribosomal subunit protein uL16c">
    <location>
        <begin position="1"/>
        <end position="136"/>
    </location>
</feature>
<evidence type="ECO:0000255" key="1">
    <source>
        <dbReference type="HAMAP-Rule" id="MF_01342"/>
    </source>
</evidence>
<evidence type="ECO:0000305" key="2"/>
<accession>P0C441</accession>
<accession>P12138</accession>
<accession>Q6QXS2</accession>
<accession>Q6QY48</accession>
<dbReference type="EMBL" id="AY522331">
    <property type="protein sequence ID" value="AAS46209.1"/>
    <property type="status" value="ALT_SEQ"/>
    <property type="molecule type" value="Genomic_DNA"/>
</dbReference>
<dbReference type="SMR" id="P0C441"/>
<dbReference type="ExpressionAtlas" id="P0C441">
    <property type="expression patterns" value="baseline"/>
</dbReference>
<dbReference type="GO" id="GO:0009507">
    <property type="term" value="C:chloroplast"/>
    <property type="evidence" value="ECO:0007669"/>
    <property type="project" value="UniProtKB-SubCell"/>
</dbReference>
<dbReference type="GO" id="GO:0005762">
    <property type="term" value="C:mitochondrial large ribosomal subunit"/>
    <property type="evidence" value="ECO:0007669"/>
    <property type="project" value="TreeGrafter"/>
</dbReference>
<dbReference type="GO" id="GO:0009536">
    <property type="term" value="C:plastid"/>
    <property type="evidence" value="ECO:0000305"/>
    <property type="project" value="Gramene"/>
</dbReference>
<dbReference type="GO" id="GO:0019843">
    <property type="term" value="F:rRNA binding"/>
    <property type="evidence" value="ECO:0007669"/>
    <property type="project" value="InterPro"/>
</dbReference>
<dbReference type="GO" id="GO:0003735">
    <property type="term" value="F:structural constituent of ribosome"/>
    <property type="evidence" value="ECO:0007669"/>
    <property type="project" value="InterPro"/>
</dbReference>
<dbReference type="GO" id="GO:0032543">
    <property type="term" value="P:mitochondrial translation"/>
    <property type="evidence" value="ECO:0007669"/>
    <property type="project" value="TreeGrafter"/>
</dbReference>
<dbReference type="CDD" id="cd01433">
    <property type="entry name" value="Ribosomal_L16_L10e"/>
    <property type="match status" value="1"/>
</dbReference>
<dbReference type="FunFam" id="3.90.1170.10:FF:000001">
    <property type="entry name" value="50S ribosomal protein L16"/>
    <property type="match status" value="1"/>
</dbReference>
<dbReference type="Gene3D" id="3.90.1170.10">
    <property type="entry name" value="Ribosomal protein L10e/L16"/>
    <property type="match status" value="1"/>
</dbReference>
<dbReference type="HAMAP" id="MF_01342">
    <property type="entry name" value="Ribosomal_uL16"/>
    <property type="match status" value="1"/>
</dbReference>
<dbReference type="InterPro" id="IPR047873">
    <property type="entry name" value="Ribosomal_uL16"/>
</dbReference>
<dbReference type="InterPro" id="IPR000114">
    <property type="entry name" value="Ribosomal_uL16_bact-type"/>
</dbReference>
<dbReference type="InterPro" id="IPR020798">
    <property type="entry name" value="Ribosomal_uL16_CS"/>
</dbReference>
<dbReference type="InterPro" id="IPR016180">
    <property type="entry name" value="Ribosomal_uL16_dom"/>
</dbReference>
<dbReference type="InterPro" id="IPR036920">
    <property type="entry name" value="Ribosomal_uL16_sf"/>
</dbReference>
<dbReference type="NCBIfam" id="TIGR01164">
    <property type="entry name" value="rplP_bact"/>
    <property type="match status" value="1"/>
</dbReference>
<dbReference type="PANTHER" id="PTHR12220">
    <property type="entry name" value="50S/60S RIBOSOMAL PROTEIN L16"/>
    <property type="match status" value="1"/>
</dbReference>
<dbReference type="PANTHER" id="PTHR12220:SF13">
    <property type="entry name" value="LARGE RIBOSOMAL SUBUNIT PROTEIN UL16M"/>
    <property type="match status" value="1"/>
</dbReference>
<dbReference type="Pfam" id="PF00252">
    <property type="entry name" value="Ribosomal_L16"/>
    <property type="match status" value="1"/>
</dbReference>
<dbReference type="PRINTS" id="PR00060">
    <property type="entry name" value="RIBOSOMALL16"/>
</dbReference>
<dbReference type="SUPFAM" id="SSF54686">
    <property type="entry name" value="Ribosomal protein L16p/L10e"/>
    <property type="match status" value="1"/>
</dbReference>
<dbReference type="PROSITE" id="PS00586">
    <property type="entry name" value="RIBOSOMAL_L16_1"/>
    <property type="match status" value="1"/>
</dbReference>
<dbReference type="PROSITE" id="PS00701">
    <property type="entry name" value="RIBOSOMAL_L16_2"/>
    <property type="match status" value="1"/>
</dbReference>
<organism>
    <name type="scientific">Oryza sativa</name>
    <name type="common">Rice</name>
    <dbReference type="NCBI Taxonomy" id="4530"/>
    <lineage>
        <taxon>Eukaryota</taxon>
        <taxon>Viridiplantae</taxon>
        <taxon>Streptophyta</taxon>
        <taxon>Embryophyta</taxon>
        <taxon>Tracheophyta</taxon>
        <taxon>Spermatophyta</taxon>
        <taxon>Magnoliopsida</taxon>
        <taxon>Liliopsida</taxon>
        <taxon>Poales</taxon>
        <taxon>Poaceae</taxon>
        <taxon>BOP clade</taxon>
        <taxon>Oryzoideae</taxon>
        <taxon>Oryzeae</taxon>
        <taxon>Oryzinae</taxon>
        <taxon>Oryza</taxon>
    </lineage>
</organism>
<comment type="subunit">
    <text evidence="1">Part of the 50S ribosomal subunit.</text>
</comment>
<comment type="subcellular location">
    <subcellularLocation>
        <location>Plastid</location>
        <location>Chloroplast</location>
    </subcellularLocation>
</comment>
<comment type="similarity">
    <text evidence="1">Belongs to the universal ribosomal protein uL16 family.</text>
</comment>
<comment type="sequence caution" evidence="2">
    <conflict type="erroneous gene model prediction">
        <sequence resource="EMBL-CDS" id="AAS46209"/>
    </conflict>
</comment>
<name>RK16_ORYSA</name>
<gene>
    <name evidence="1" type="primary">rpl16</name>
    <name type="ORF">PA110</name>
</gene>
<protein>
    <recommendedName>
        <fullName evidence="1">Large ribosomal subunit protein uL16c</fullName>
    </recommendedName>
    <alternativeName>
        <fullName evidence="2">50S ribosomal protein L16, chloroplastic</fullName>
    </alternativeName>
</protein>
<proteinExistence type="inferred from homology"/>